<protein>
    <recommendedName>
        <fullName evidence="1">Probable endonuclease 4</fullName>
        <ecNumber evidence="1">3.1.21.2</ecNumber>
    </recommendedName>
    <alternativeName>
        <fullName evidence="1">Endodeoxyribonuclease IV</fullName>
    </alternativeName>
    <alternativeName>
        <fullName evidence="1">Endonuclease IV</fullName>
    </alternativeName>
</protein>
<name>END4_CAMC5</name>
<accession>A7GW36</accession>
<evidence type="ECO:0000255" key="1">
    <source>
        <dbReference type="HAMAP-Rule" id="MF_00152"/>
    </source>
</evidence>
<proteinExistence type="inferred from homology"/>
<keyword id="KW-0227">DNA damage</keyword>
<keyword id="KW-0234">DNA repair</keyword>
<keyword id="KW-0255">Endonuclease</keyword>
<keyword id="KW-0378">Hydrolase</keyword>
<keyword id="KW-0479">Metal-binding</keyword>
<keyword id="KW-0540">Nuclease</keyword>
<keyword id="KW-1185">Reference proteome</keyword>
<keyword id="KW-0862">Zinc</keyword>
<reference key="1">
    <citation type="submission" date="2007-07" db="EMBL/GenBank/DDBJ databases">
        <title>Genome sequence of Campylobacter curvus 525.92 isolated from human feces.</title>
        <authorList>
            <person name="Fouts D.E."/>
            <person name="Mongodin E.F."/>
            <person name="Puiu D."/>
            <person name="Sebastian Y."/>
            <person name="Miller W.G."/>
            <person name="Mandrell R.E."/>
            <person name="Lastovica A.J."/>
            <person name="Nelson K.E."/>
        </authorList>
    </citation>
    <scope>NUCLEOTIDE SEQUENCE [LARGE SCALE GENOMIC DNA]</scope>
    <source>
        <strain>525.92</strain>
    </source>
</reference>
<sequence>MRYIGAHVSASGGVQNAPLNAAKIGANAFALFVKNQRQWSAKPLESAAISEFEQNCKAANISPRHILPHDSYLINLGHYDDAKREQSFNAFVDEIERVSELGLELLNFHPGSHLNEISQNECLNLIAECMNEALKRTDGVKLVIENTAGQGSNLGFRFEQLAYLIERTDDKSRVGVCIDTCHAFAAGYDLRTPEAYKKTMDEFDAVIGYEFLSAMHLNDCKFGLNSRKDRHESLGKGFLGLKAFECIMNDEHIGEIPMILETIDDSIWADEIKILRNLQKGKK</sequence>
<comment type="function">
    <text evidence="1">Endonuclease IV plays a role in DNA repair. It cleaves phosphodiester bonds at apurinic or apyrimidinic (AP) sites, generating a 3'-hydroxyl group and a 5'-terminal sugar phosphate.</text>
</comment>
<comment type="catalytic activity">
    <reaction evidence="1">
        <text>Endonucleolytic cleavage to 5'-phosphooligonucleotide end-products.</text>
        <dbReference type="EC" id="3.1.21.2"/>
    </reaction>
</comment>
<comment type="cofactor">
    <cofactor evidence="1">
        <name>Zn(2+)</name>
        <dbReference type="ChEBI" id="CHEBI:29105"/>
    </cofactor>
    <text evidence="1">Binds 3 Zn(2+) ions.</text>
</comment>
<comment type="similarity">
    <text evidence="1">Belongs to the AP endonuclease 2 family.</text>
</comment>
<organism>
    <name type="scientific">Campylobacter curvus (strain 525.92)</name>
    <dbReference type="NCBI Taxonomy" id="360105"/>
    <lineage>
        <taxon>Bacteria</taxon>
        <taxon>Pseudomonadati</taxon>
        <taxon>Campylobacterota</taxon>
        <taxon>Epsilonproteobacteria</taxon>
        <taxon>Campylobacterales</taxon>
        <taxon>Campylobacteraceae</taxon>
        <taxon>Campylobacter</taxon>
    </lineage>
</organism>
<gene>
    <name evidence="1" type="primary">nfo</name>
    <name type="ordered locus">Ccur92_01240</name>
    <name type="ORF">CCV52592_1487</name>
</gene>
<feature type="chain" id="PRO_1000011294" description="Probable endonuclease 4">
    <location>
        <begin position="1"/>
        <end position="283"/>
    </location>
</feature>
<feature type="binding site" evidence="1">
    <location>
        <position position="69"/>
    </location>
    <ligand>
        <name>Zn(2+)</name>
        <dbReference type="ChEBI" id="CHEBI:29105"/>
        <label>1</label>
    </ligand>
</feature>
<feature type="binding site" evidence="1">
    <location>
        <position position="109"/>
    </location>
    <ligand>
        <name>Zn(2+)</name>
        <dbReference type="ChEBI" id="CHEBI:29105"/>
        <label>1</label>
    </ligand>
</feature>
<feature type="binding site" evidence="1">
    <location>
        <position position="145"/>
    </location>
    <ligand>
        <name>Zn(2+)</name>
        <dbReference type="ChEBI" id="CHEBI:29105"/>
        <label>1</label>
    </ligand>
</feature>
<feature type="binding site" evidence="1">
    <location>
        <position position="145"/>
    </location>
    <ligand>
        <name>Zn(2+)</name>
        <dbReference type="ChEBI" id="CHEBI:29105"/>
        <label>2</label>
    </ligand>
</feature>
<feature type="binding site" evidence="1">
    <location>
        <position position="179"/>
    </location>
    <ligand>
        <name>Zn(2+)</name>
        <dbReference type="ChEBI" id="CHEBI:29105"/>
        <label>2</label>
    </ligand>
</feature>
<feature type="binding site" evidence="1">
    <location>
        <position position="182"/>
    </location>
    <ligand>
        <name>Zn(2+)</name>
        <dbReference type="ChEBI" id="CHEBI:29105"/>
        <label>3</label>
    </ligand>
</feature>
<feature type="binding site" evidence="1">
    <location>
        <position position="216"/>
    </location>
    <ligand>
        <name>Zn(2+)</name>
        <dbReference type="ChEBI" id="CHEBI:29105"/>
        <label>2</label>
    </ligand>
</feature>
<feature type="binding site" evidence="1">
    <location>
        <position position="229"/>
    </location>
    <ligand>
        <name>Zn(2+)</name>
        <dbReference type="ChEBI" id="CHEBI:29105"/>
        <label>3</label>
    </ligand>
</feature>
<feature type="binding site" evidence="1">
    <location>
        <position position="231"/>
    </location>
    <ligand>
        <name>Zn(2+)</name>
        <dbReference type="ChEBI" id="CHEBI:29105"/>
        <label>3</label>
    </ligand>
</feature>
<feature type="binding site" evidence="1">
    <location>
        <position position="261"/>
    </location>
    <ligand>
        <name>Zn(2+)</name>
        <dbReference type="ChEBI" id="CHEBI:29105"/>
        <label>2</label>
    </ligand>
</feature>
<dbReference type="EC" id="3.1.21.2" evidence="1"/>
<dbReference type="EMBL" id="CP000767">
    <property type="protein sequence ID" value="EAU00603.1"/>
    <property type="molecule type" value="Genomic_DNA"/>
</dbReference>
<dbReference type="RefSeq" id="WP_009649634.1">
    <property type="nucleotide sequence ID" value="NC_009715.2"/>
</dbReference>
<dbReference type="SMR" id="A7GW36"/>
<dbReference type="STRING" id="360105.CCV52592_1487"/>
<dbReference type="KEGG" id="ccv:CCV52592_1487"/>
<dbReference type="HOGENOM" id="CLU_025885_0_4_7"/>
<dbReference type="OrthoDB" id="9805666at2"/>
<dbReference type="Proteomes" id="UP000006380">
    <property type="component" value="Chromosome"/>
</dbReference>
<dbReference type="GO" id="GO:0008833">
    <property type="term" value="F:deoxyribonuclease IV (phage-T4-induced) activity"/>
    <property type="evidence" value="ECO:0007669"/>
    <property type="project" value="UniProtKB-UniRule"/>
</dbReference>
<dbReference type="GO" id="GO:0003677">
    <property type="term" value="F:DNA binding"/>
    <property type="evidence" value="ECO:0007669"/>
    <property type="project" value="InterPro"/>
</dbReference>
<dbReference type="GO" id="GO:0003906">
    <property type="term" value="F:DNA-(apurinic or apyrimidinic site) endonuclease activity"/>
    <property type="evidence" value="ECO:0007669"/>
    <property type="project" value="TreeGrafter"/>
</dbReference>
<dbReference type="GO" id="GO:0008081">
    <property type="term" value="F:phosphoric diester hydrolase activity"/>
    <property type="evidence" value="ECO:0007669"/>
    <property type="project" value="TreeGrafter"/>
</dbReference>
<dbReference type="GO" id="GO:0008270">
    <property type="term" value="F:zinc ion binding"/>
    <property type="evidence" value="ECO:0007669"/>
    <property type="project" value="UniProtKB-UniRule"/>
</dbReference>
<dbReference type="GO" id="GO:0006284">
    <property type="term" value="P:base-excision repair"/>
    <property type="evidence" value="ECO:0007669"/>
    <property type="project" value="TreeGrafter"/>
</dbReference>
<dbReference type="CDD" id="cd00019">
    <property type="entry name" value="AP2Ec"/>
    <property type="match status" value="1"/>
</dbReference>
<dbReference type="FunFam" id="3.20.20.150:FF:000001">
    <property type="entry name" value="Probable endonuclease 4"/>
    <property type="match status" value="1"/>
</dbReference>
<dbReference type="Gene3D" id="3.20.20.150">
    <property type="entry name" value="Divalent-metal-dependent TIM barrel enzymes"/>
    <property type="match status" value="1"/>
</dbReference>
<dbReference type="HAMAP" id="MF_00152">
    <property type="entry name" value="Nfo"/>
    <property type="match status" value="1"/>
</dbReference>
<dbReference type="InterPro" id="IPR001719">
    <property type="entry name" value="AP_endonuc_2"/>
</dbReference>
<dbReference type="InterPro" id="IPR018246">
    <property type="entry name" value="AP_endonuc_F2_Zn_BS"/>
</dbReference>
<dbReference type="InterPro" id="IPR036237">
    <property type="entry name" value="Xyl_isomerase-like_sf"/>
</dbReference>
<dbReference type="InterPro" id="IPR013022">
    <property type="entry name" value="Xyl_isomerase-like_TIM-brl"/>
</dbReference>
<dbReference type="NCBIfam" id="TIGR00587">
    <property type="entry name" value="nfo"/>
    <property type="match status" value="1"/>
</dbReference>
<dbReference type="NCBIfam" id="NF002199">
    <property type="entry name" value="PRK01060.1-4"/>
    <property type="match status" value="1"/>
</dbReference>
<dbReference type="PANTHER" id="PTHR21445:SF0">
    <property type="entry name" value="APURINIC-APYRIMIDINIC ENDONUCLEASE"/>
    <property type="match status" value="1"/>
</dbReference>
<dbReference type="PANTHER" id="PTHR21445">
    <property type="entry name" value="ENDONUCLEASE IV ENDODEOXYRIBONUCLEASE IV"/>
    <property type="match status" value="1"/>
</dbReference>
<dbReference type="Pfam" id="PF01261">
    <property type="entry name" value="AP_endonuc_2"/>
    <property type="match status" value="1"/>
</dbReference>
<dbReference type="SMART" id="SM00518">
    <property type="entry name" value="AP2Ec"/>
    <property type="match status" value="1"/>
</dbReference>
<dbReference type="SUPFAM" id="SSF51658">
    <property type="entry name" value="Xylose isomerase-like"/>
    <property type="match status" value="1"/>
</dbReference>
<dbReference type="PROSITE" id="PS00729">
    <property type="entry name" value="AP_NUCLEASE_F2_1"/>
    <property type="match status" value="1"/>
</dbReference>
<dbReference type="PROSITE" id="PS00730">
    <property type="entry name" value="AP_NUCLEASE_F2_2"/>
    <property type="match status" value="1"/>
</dbReference>
<dbReference type="PROSITE" id="PS51432">
    <property type="entry name" value="AP_NUCLEASE_F2_4"/>
    <property type="match status" value="1"/>
</dbReference>